<organism>
    <name type="scientific">Epichloe festucae var. lolii</name>
    <name type="common">Neotyphodium lolii</name>
    <name type="synonym">Acremonium lolii</name>
    <dbReference type="NCBI Taxonomy" id="73839"/>
    <lineage>
        <taxon>Eukaryota</taxon>
        <taxon>Fungi</taxon>
        <taxon>Dikarya</taxon>
        <taxon>Ascomycota</taxon>
        <taxon>Pezizomycotina</taxon>
        <taxon>Sordariomycetes</taxon>
        <taxon>Hypocreomycetidae</taxon>
        <taxon>Hypocreales</taxon>
        <taxon>Clavicipitaceae</taxon>
        <taxon>Epichloe</taxon>
    </lineage>
</organism>
<sequence length="525" mass="60356">MAFASLLHHIWNHAVDCAEQLTWWQTIVSFIIFCIMCSWLPGNGEMRAPFVGYRWPFEPTFWVRMRFIFQSLGMMTEGYSKFKDSMFKITTNDADWLVLSQRYLDDLQSLPAERLSHTDALVTMWGSSHSPFALLNKSDLSSRALRDVVAPNYAKDLDSLVDELRYSLEHDIDIQDDWKPIDALELSSKLVLRISQRILIGWPMSRDQELLECAQGYADAATVVQFALKLLPRQIRPLVYPLLPQAWATKSWIRRCDKILAKEMQRRQVLEKSDPVYEKPKDLLQGMVDLEPSRPVDKLGHDFLVQALISRMAPVVTMAQTLVDLALHPEDIEELRDEVLQVIGPDGAGLGNLRQSFTKLDKMDSVLRESARFTPLSMMTMHRRVQDAKGITLHDGVHLPRGTHVAFPAYHIGRDPKLVSGADIYDGLRWYRKDLGEAQENEAPKHRFVTPDSNYLTFGSGKYVCPGRFIAEHMLKLMMTAVLLRYEFKWPPGVPVPEQQYRHVFAYPSKTTLLIKRRKDGDQIL</sequence>
<accession>Q15FB6</accession>
<protein>
    <recommendedName>
        <fullName evidence="8">Cytochrome P450 monooxygenase ltmJ</fullName>
        <ecNumber evidence="10">1.-.-.-</ecNumber>
    </recommendedName>
    <alternativeName>
        <fullName evidence="8">Lolitrem B biosynthesis cluster 3 protein J</fullName>
    </alternativeName>
</protein>
<keyword id="KW-0325">Glycoprotein</keyword>
<keyword id="KW-0349">Heme</keyword>
<keyword id="KW-0408">Iron</keyword>
<keyword id="KW-0472">Membrane</keyword>
<keyword id="KW-0479">Metal-binding</keyword>
<keyword id="KW-0503">Monooxygenase</keyword>
<keyword id="KW-0560">Oxidoreductase</keyword>
<keyword id="KW-0812">Transmembrane</keyword>
<keyword id="KW-1133">Transmembrane helix</keyword>
<proteinExistence type="evidence at transcript level"/>
<evidence type="ECO:0000250" key="1">
    <source>
        <dbReference type="UniProtKB" id="P04798"/>
    </source>
</evidence>
<evidence type="ECO:0000255" key="2"/>
<evidence type="ECO:0000255" key="3">
    <source>
        <dbReference type="PROSITE-ProRule" id="PRU00498"/>
    </source>
</evidence>
<evidence type="ECO:0000269" key="4">
    <source>
    </source>
</evidence>
<evidence type="ECO:0000269" key="5">
    <source>
    </source>
</evidence>
<evidence type="ECO:0000269" key="6">
    <source>
    </source>
</evidence>
<evidence type="ECO:0000269" key="7">
    <source>
    </source>
</evidence>
<evidence type="ECO:0000303" key="8">
    <source>
    </source>
</evidence>
<evidence type="ECO:0000305" key="9"/>
<evidence type="ECO:0000305" key="10">
    <source>
    </source>
</evidence>
<reference key="1">
    <citation type="journal article" date="2006" name="Fungal Genet. Biol.">
        <title>A complex gene cluster for indole-diterpene biosynthesis in the grass endophyte Neotyphodium lolii.</title>
        <authorList>
            <person name="Young C.A."/>
            <person name="Felitti S."/>
            <person name="Shields K."/>
            <person name="Spangenberg G."/>
            <person name="Johnson R.D."/>
            <person name="Bryan G.T."/>
            <person name="Saikia S."/>
            <person name="Scott B."/>
        </authorList>
    </citation>
    <scope>NUCLEOTIDE SEQUENCE [GENOMIC DNA]</scope>
    <source>
        <strain>Lp19</strain>
    </source>
</reference>
<reference key="2">
    <citation type="journal article" date="2005" name="Mol. Genet. Genomics">
        <title>Molecular cloning and genetic analysis of a symbiosis-expressed gene cluster for lolitrem biosynthesis from a mutualistic endophyte of perennial ryegrass.</title>
        <authorList>
            <person name="Young C.A."/>
            <person name="Bryant M.K."/>
            <person name="Christensen M.J."/>
            <person name="Tapper B.A."/>
            <person name="Bryan G.T."/>
            <person name="Scott B."/>
        </authorList>
    </citation>
    <scope>FUNCTION</scope>
    <source>
        <strain>Lp19</strain>
    </source>
</reference>
<reference key="3">
    <citation type="journal article" date="2010" name="Plant Physiol.">
        <title>Disruption of signaling in a fungal-grass symbiosis leads to pathogenesis.</title>
        <authorList>
            <person name="Eaton C.J."/>
            <person name="Cox M.P."/>
            <person name="Ambrose B."/>
            <person name="Becker M."/>
            <person name="Hesse U."/>
            <person name="Schardl C.L."/>
            <person name="Scott B."/>
        </authorList>
    </citation>
    <scope>INDUCTION</scope>
</reference>
<reference key="4">
    <citation type="journal article" date="2012" name="FEBS Lett.">
        <title>Functional analysis of an indole-diterpene gene cluster for lolitrem B biosynthesis in the grass endosymbiont Epichloe festucae.</title>
        <authorList>
            <person name="Saikia S."/>
            <person name="Takemoto D."/>
            <person name="Tapper B.A."/>
            <person name="Lane G.A."/>
            <person name="Fraser K."/>
            <person name="Scott B."/>
        </authorList>
    </citation>
    <scope>FUNCTION</scope>
    <scope>DISRUPTION PHENOTYPE</scope>
    <scope>PATHWAY</scope>
</reference>
<dbReference type="EC" id="1.-.-.-" evidence="10"/>
<dbReference type="EMBL" id="DQ443465">
    <property type="protein sequence ID" value="ABF20221.1"/>
    <property type="molecule type" value="Genomic_DNA"/>
</dbReference>
<dbReference type="SMR" id="Q15FB6"/>
<dbReference type="GlyCosmos" id="Q15FB6">
    <property type="glycosylation" value="1 site, No reported glycans"/>
</dbReference>
<dbReference type="GO" id="GO:0016020">
    <property type="term" value="C:membrane"/>
    <property type="evidence" value="ECO:0007669"/>
    <property type="project" value="UniProtKB-SubCell"/>
</dbReference>
<dbReference type="GO" id="GO:0020037">
    <property type="term" value="F:heme binding"/>
    <property type="evidence" value="ECO:0007669"/>
    <property type="project" value="InterPro"/>
</dbReference>
<dbReference type="GO" id="GO:0005506">
    <property type="term" value="F:iron ion binding"/>
    <property type="evidence" value="ECO:0007669"/>
    <property type="project" value="InterPro"/>
</dbReference>
<dbReference type="GO" id="GO:0004497">
    <property type="term" value="F:monooxygenase activity"/>
    <property type="evidence" value="ECO:0007669"/>
    <property type="project" value="UniProtKB-KW"/>
</dbReference>
<dbReference type="GO" id="GO:0016705">
    <property type="term" value="F:oxidoreductase activity, acting on paired donors, with incorporation or reduction of molecular oxygen"/>
    <property type="evidence" value="ECO:0007669"/>
    <property type="project" value="InterPro"/>
</dbReference>
<dbReference type="GO" id="GO:0019748">
    <property type="term" value="P:secondary metabolic process"/>
    <property type="evidence" value="ECO:0007669"/>
    <property type="project" value="UniProtKB-ARBA"/>
</dbReference>
<dbReference type="CDD" id="cd11041">
    <property type="entry name" value="CYP503A1-like"/>
    <property type="match status" value="1"/>
</dbReference>
<dbReference type="Gene3D" id="1.10.630.10">
    <property type="entry name" value="Cytochrome P450"/>
    <property type="match status" value="1"/>
</dbReference>
<dbReference type="InterPro" id="IPR001128">
    <property type="entry name" value="Cyt_P450"/>
</dbReference>
<dbReference type="InterPro" id="IPR002401">
    <property type="entry name" value="Cyt_P450_E_grp-I"/>
</dbReference>
<dbReference type="InterPro" id="IPR036396">
    <property type="entry name" value="Cyt_P450_sf"/>
</dbReference>
<dbReference type="PANTHER" id="PTHR46206">
    <property type="entry name" value="CYTOCHROME P450"/>
    <property type="match status" value="1"/>
</dbReference>
<dbReference type="Pfam" id="PF00067">
    <property type="entry name" value="p450"/>
    <property type="match status" value="1"/>
</dbReference>
<dbReference type="PRINTS" id="PR00463">
    <property type="entry name" value="EP450I"/>
</dbReference>
<dbReference type="SUPFAM" id="SSF48264">
    <property type="entry name" value="Cytochrome P450"/>
    <property type="match status" value="1"/>
</dbReference>
<comment type="function">
    <text evidence="4 5 7">Cytochrome P450 monooxygenase; part of the gene clusters that mediates the biosynthesis of lolitrems, indole-diterpene mycotoxins that are potent tremorgens in mammals, and are synthesized by clavicipitaceous fungal endophytes in association with their grass hosts (PubMed:16765617, PubMed:22750140). The geranylgeranyl diphosphate (GGPP) synthase ltmG is proposed to catalyze the first step in lolitrem biosynthesis (PubMed:15991026, PubMed:16765617). LtmG catalyzes a series of iterative condensations of isopentenyl diphosphate (IPP) with dimethylallyl diphosphate (DMAPP), geranyl diphosphate (GPP), and farnesyl diphosphate (FPP), to form GGPP (PubMed:15991026, PubMed:16765617). GGPP then condenses with indole-3-glycerol phosphate to form 3-geranylgeranylindole, an acyclic intermediate, to be incorporated into paxilline (PubMed:16765617). Either ltmG or ltmC could be responsible for this step, as both are putative prenyl transferases (PubMed:16765617). The FAD-dependent monooxygenase ltmM then catalyzes the epoxidation of the two terminal alkenes of the geranylgeranyl moiety, which is subsequently cyclized by ltmB, to paspaline (PubMed:15991026, PubMed:16765617). The cytochrome P450 monooxygenases ltmQ and ltmP can sequentially oxidize paspaline to terpendole E and terpendole F (PubMed:22750140). Alternatively, ltmP converts paspaline to an intermediate which is oxidized by ltmQ to terpendole F (PubMed:22750140). LtmF, ltmK, ltmE and ltmJ appear to be unique to the epichloe endophytes (PubMed:15991026, PubMed:16765617). The prenyltransferase ltmF is involved in the 27-hydroxyl-O-prenylation (PubMed:22750140). The cytochrome P450 monooxygenase ltmK is required for the oxidative acetal ring formation (PubMed:22750140). The multi-functional prenyltransferase ltmE is required for C20- and C21-prenylations of the indole ring of paspalanes and acts together with the cytochrome P450 monooxygenase ltmJ to yield lolitremanes by multiple oxidations and ring closures (PubMed:22750140). The stereoisomer pairs of lolitriol and lolitrem N or lolitrem B and lolitrem F may be attributed to variations in the way in which ring closure can occur under the action of ltmJ (PubMed:22750140). While the major product of this pathway is lolitrem B, the prenyl transferases and cytochrome P450 monooxygenases identified in this pathway have a remarkable versatility in their regio- and stereo-specificities to generate a diverse range of metabolites that are products of a metabolic grid rather than a linear pathway (PubMed:22750140).</text>
</comment>
<comment type="cofactor">
    <cofactor evidence="1">
        <name>heme</name>
        <dbReference type="ChEBI" id="CHEBI:30413"/>
    </cofactor>
</comment>
<comment type="pathway">
    <text evidence="7">Secondary metabolite biosynthesis.</text>
</comment>
<comment type="subcellular location">
    <subcellularLocation>
        <location evidence="2">Membrane</location>
        <topology evidence="2">Single-pass membrane protein</topology>
    </subcellularLocation>
</comment>
<comment type="induction">
    <text evidence="6">Expression is down-regulated when the stress-activated mitogen-activated protein kinase (sakA) is deleted (PubMed:20519633).</text>
</comment>
<comment type="disruption phenotype">
    <text evidence="7">Does not produce lolitremanes but accumulates both simple and O-prenylated paspalanes (PubMed:22750140).</text>
</comment>
<comment type="similarity">
    <text evidence="9">Belongs to the cytochrome P450 family.</text>
</comment>
<gene>
    <name type="primary">ltmJ</name>
</gene>
<name>LTMJ_EPIFI</name>
<feature type="chain" id="PRO_0000444330" description="Cytochrome P450 monooxygenase ltmJ">
    <location>
        <begin position="1"/>
        <end position="525"/>
    </location>
</feature>
<feature type="transmembrane region" description="Helical" evidence="2">
    <location>
        <begin position="21"/>
        <end position="43"/>
    </location>
</feature>
<feature type="binding site" description="axial binding residue" evidence="1">
    <location>
        <position position="465"/>
    </location>
    <ligand>
        <name>heme</name>
        <dbReference type="ChEBI" id="CHEBI:30413"/>
    </ligand>
    <ligandPart>
        <name>Fe</name>
        <dbReference type="ChEBI" id="CHEBI:18248"/>
    </ligandPart>
</feature>
<feature type="glycosylation site" description="N-linked (GlcNAc...) asparagine" evidence="3">
    <location>
        <position position="136"/>
    </location>
</feature>